<reference key="1">
    <citation type="journal article" date="2007" name="PLoS Genet.">
        <title>The complete genome sequence of Yersinia pseudotuberculosis IP31758, the causative agent of Far East scarlet-like fever.</title>
        <authorList>
            <person name="Eppinger M."/>
            <person name="Rosovitz M.J."/>
            <person name="Fricke W.F."/>
            <person name="Rasko D.A."/>
            <person name="Kokorina G."/>
            <person name="Fayolle C."/>
            <person name="Lindler L.E."/>
            <person name="Carniel E."/>
            <person name="Ravel J."/>
        </authorList>
    </citation>
    <scope>NUCLEOTIDE SEQUENCE [LARGE SCALE GENOMIC DNA]</scope>
    <source>
        <strain>IP 31758</strain>
    </source>
</reference>
<organism>
    <name type="scientific">Yersinia pseudotuberculosis serotype O:1b (strain IP 31758)</name>
    <dbReference type="NCBI Taxonomy" id="349747"/>
    <lineage>
        <taxon>Bacteria</taxon>
        <taxon>Pseudomonadati</taxon>
        <taxon>Pseudomonadota</taxon>
        <taxon>Gammaproteobacteria</taxon>
        <taxon>Enterobacterales</taxon>
        <taxon>Yersiniaceae</taxon>
        <taxon>Yersinia</taxon>
    </lineage>
</organism>
<accession>A7FCZ0</accession>
<comment type="function">
    <text evidence="1">Binds the 23S rRNA.</text>
</comment>
<comment type="cofactor">
    <cofactor evidence="1">
        <name>Zn(2+)</name>
        <dbReference type="ChEBI" id="CHEBI:29105"/>
    </cofactor>
    <text evidence="1">Binds 1 zinc ion per subunit.</text>
</comment>
<comment type="subunit">
    <text evidence="1">Part of the 50S ribosomal subunit.</text>
</comment>
<comment type="similarity">
    <text evidence="1">Belongs to the bacterial ribosomal protein bL31 family. Type A subfamily.</text>
</comment>
<protein>
    <recommendedName>
        <fullName evidence="1">Large ribosomal subunit protein bL31</fullName>
    </recommendedName>
    <alternativeName>
        <fullName evidence="2">50S ribosomal protein L31</fullName>
    </alternativeName>
</protein>
<dbReference type="EMBL" id="CP000720">
    <property type="protein sequence ID" value="ABS47907.1"/>
    <property type="molecule type" value="Genomic_DNA"/>
</dbReference>
<dbReference type="RefSeq" id="WP_002216737.1">
    <property type="nucleotide sequence ID" value="NC_009708.1"/>
</dbReference>
<dbReference type="SMR" id="A7FCZ0"/>
<dbReference type="GeneID" id="96663581"/>
<dbReference type="KEGG" id="ypi:YpsIP31758_0118"/>
<dbReference type="HOGENOM" id="CLU_114306_4_3_6"/>
<dbReference type="Proteomes" id="UP000002412">
    <property type="component" value="Chromosome"/>
</dbReference>
<dbReference type="GO" id="GO:1990904">
    <property type="term" value="C:ribonucleoprotein complex"/>
    <property type="evidence" value="ECO:0007669"/>
    <property type="project" value="UniProtKB-KW"/>
</dbReference>
<dbReference type="GO" id="GO:0005840">
    <property type="term" value="C:ribosome"/>
    <property type="evidence" value="ECO:0007669"/>
    <property type="project" value="UniProtKB-KW"/>
</dbReference>
<dbReference type="GO" id="GO:0046872">
    <property type="term" value="F:metal ion binding"/>
    <property type="evidence" value="ECO:0007669"/>
    <property type="project" value="UniProtKB-KW"/>
</dbReference>
<dbReference type="GO" id="GO:0019843">
    <property type="term" value="F:rRNA binding"/>
    <property type="evidence" value="ECO:0007669"/>
    <property type="project" value="UniProtKB-KW"/>
</dbReference>
<dbReference type="GO" id="GO:0003735">
    <property type="term" value="F:structural constituent of ribosome"/>
    <property type="evidence" value="ECO:0007669"/>
    <property type="project" value="InterPro"/>
</dbReference>
<dbReference type="GO" id="GO:0006412">
    <property type="term" value="P:translation"/>
    <property type="evidence" value="ECO:0007669"/>
    <property type="project" value="UniProtKB-UniRule"/>
</dbReference>
<dbReference type="FunFam" id="4.10.830.30:FF:000001">
    <property type="entry name" value="50S ribosomal protein L31"/>
    <property type="match status" value="1"/>
</dbReference>
<dbReference type="Gene3D" id="4.10.830.30">
    <property type="entry name" value="Ribosomal protein L31"/>
    <property type="match status" value="1"/>
</dbReference>
<dbReference type="HAMAP" id="MF_00501">
    <property type="entry name" value="Ribosomal_bL31_1"/>
    <property type="match status" value="1"/>
</dbReference>
<dbReference type="InterPro" id="IPR034704">
    <property type="entry name" value="Ribosomal_bL28/bL31-like_sf"/>
</dbReference>
<dbReference type="InterPro" id="IPR002150">
    <property type="entry name" value="Ribosomal_bL31"/>
</dbReference>
<dbReference type="InterPro" id="IPR027491">
    <property type="entry name" value="Ribosomal_bL31_A"/>
</dbReference>
<dbReference type="InterPro" id="IPR042105">
    <property type="entry name" value="Ribosomal_bL31_sf"/>
</dbReference>
<dbReference type="NCBIfam" id="TIGR00105">
    <property type="entry name" value="L31"/>
    <property type="match status" value="1"/>
</dbReference>
<dbReference type="NCBIfam" id="NF000612">
    <property type="entry name" value="PRK00019.1"/>
    <property type="match status" value="1"/>
</dbReference>
<dbReference type="PANTHER" id="PTHR33280">
    <property type="entry name" value="50S RIBOSOMAL PROTEIN L31, CHLOROPLASTIC"/>
    <property type="match status" value="1"/>
</dbReference>
<dbReference type="PANTHER" id="PTHR33280:SF6">
    <property type="entry name" value="LARGE RIBOSOMAL SUBUNIT PROTEIN BL31A"/>
    <property type="match status" value="1"/>
</dbReference>
<dbReference type="Pfam" id="PF01197">
    <property type="entry name" value="Ribosomal_L31"/>
    <property type="match status" value="1"/>
</dbReference>
<dbReference type="PRINTS" id="PR01249">
    <property type="entry name" value="RIBOSOMALL31"/>
</dbReference>
<dbReference type="SUPFAM" id="SSF143800">
    <property type="entry name" value="L28p-like"/>
    <property type="match status" value="1"/>
</dbReference>
<dbReference type="PROSITE" id="PS01143">
    <property type="entry name" value="RIBOSOMAL_L31"/>
    <property type="match status" value="1"/>
</dbReference>
<sequence>MKQGIHPKYEQVTASCSCGNVIKINSTVGHDLNLDVCGECHPFYTGKQRDVASGGRVDRFNKRFSVPGAKK</sequence>
<keyword id="KW-0479">Metal-binding</keyword>
<keyword id="KW-0687">Ribonucleoprotein</keyword>
<keyword id="KW-0689">Ribosomal protein</keyword>
<keyword id="KW-0694">RNA-binding</keyword>
<keyword id="KW-0699">rRNA-binding</keyword>
<keyword id="KW-0862">Zinc</keyword>
<gene>
    <name evidence="1" type="primary">rpmE</name>
    <name type="ordered locus">YpsIP31758_0118</name>
</gene>
<feature type="chain" id="PRO_1000126769" description="Large ribosomal subunit protein bL31">
    <location>
        <begin position="1"/>
        <end position="71"/>
    </location>
</feature>
<feature type="binding site" evidence="1">
    <location>
        <position position="16"/>
    </location>
    <ligand>
        <name>Zn(2+)</name>
        <dbReference type="ChEBI" id="CHEBI:29105"/>
    </ligand>
</feature>
<feature type="binding site" evidence="1">
    <location>
        <position position="18"/>
    </location>
    <ligand>
        <name>Zn(2+)</name>
        <dbReference type="ChEBI" id="CHEBI:29105"/>
    </ligand>
</feature>
<feature type="binding site" evidence="1">
    <location>
        <position position="37"/>
    </location>
    <ligand>
        <name>Zn(2+)</name>
        <dbReference type="ChEBI" id="CHEBI:29105"/>
    </ligand>
</feature>
<feature type="binding site" evidence="1">
    <location>
        <position position="40"/>
    </location>
    <ligand>
        <name>Zn(2+)</name>
        <dbReference type="ChEBI" id="CHEBI:29105"/>
    </ligand>
</feature>
<evidence type="ECO:0000255" key="1">
    <source>
        <dbReference type="HAMAP-Rule" id="MF_00501"/>
    </source>
</evidence>
<evidence type="ECO:0000305" key="2"/>
<proteinExistence type="inferred from homology"/>
<name>RL31_YERP3</name>